<sequence length="200" mass="21368">MASSLTCAGVIWALLSFLCAATSCVGFFMPYWLLGSQMGKPVSFGTFRRCSYPIRDEARGGTVMLEQCGRYASFQGIPSLEWRICTVVTGIGCGLLLLVALTAIMGCCVTDLISRTIGRVAGGIQFVGGLLIGSGCALYPLGWDSEEVRQTCSNSSDQFDLGSCEIGWAYYCTGAGAAAAMVLCTWMACFAGKKQKHYPY</sequence>
<name>LHPL6_DANRE</name>
<accession>Q5PRC1</accession>
<reference key="1">
    <citation type="submission" date="2004-12" db="EMBL/GenBank/DDBJ databases">
        <authorList>
            <consortium name="NIH - Zebrafish Gene Collection (ZGC) project"/>
        </authorList>
    </citation>
    <scope>NUCLEOTIDE SEQUENCE [LARGE SCALE MRNA]</scope>
    <source>
        <tissue>Olfactory epithelium</tissue>
    </source>
</reference>
<organism>
    <name type="scientific">Danio rerio</name>
    <name type="common">Zebrafish</name>
    <name type="synonym">Brachydanio rerio</name>
    <dbReference type="NCBI Taxonomy" id="7955"/>
    <lineage>
        <taxon>Eukaryota</taxon>
        <taxon>Metazoa</taxon>
        <taxon>Chordata</taxon>
        <taxon>Craniata</taxon>
        <taxon>Vertebrata</taxon>
        <taxon>Euteleostomi</taxon>
        <taxon>Actinopterygii</taxon>
        <taxon>Neopterygii</taxon>
        <taxon>Teleostei</taxon>
        <taxon>Ostariophysi</taxon>
        <taxon>Cypriniformes</taxon>
        <taxon>Danionidae</taxon>
        <taxon>Danioninae</taxon>
        <taxon>Danio</taxon>
    </lineage>
</organism>
<dbReference type="EMBL" id="BC086720">
    <property type="protein sequence ID" value="AAH86720.1"/>
    <property type="molecule type" value="mRNA"/>
</dbReference>
<dbReference type="RefSeq" id="NP_001008653.1">
    <property type="nucleotide sequence ID" value="NM_001008653.1"/>
</dbReference>
<dbReference type="SMR" id="Q5PRC1"/>
<dbReference type="FunCoup" id="Q5PRC1">
    <property type="interactions" value="717"/>
</dbReference>
<dbReference type="STRING" id="7955.ENSDARP00000007599"/>
<dbReference type="GlyCosmos" id="Q5PRC1">
    <property type="glycosylation" value="1 site, No reported glycans"/>
</dbReference>
<dbReference type="PaxDb" id="7955-ENSDARP00000007599"/>
<dbReference type="Ensembl" id="ENSDART00000019416">
    <property type="protein sequence ID" value="ENSDARP00000007599"/>
    <property type="gene ID" value="ENSDARG00000004363"/>
</dbReference>
<dbReference type="Ensembl" id="ENSDART00000182579">
    <property type="protein sequence ID" value="ENSDARP00000149721"/>
    <property type="gene ID" value="ENSDARG00000004363"/>
</dbReference>
<dbReference type="Ensembl" id="ENSDART00000185634">
    <property type="protein sequence ID" value="ENSDARP00000147943"/>
    <property type="gene ID" value="ENSDARG00000004363"/>
</dbReference>
<dbReference type="GeneID" id="494110"/>
<dbReference type="KEGG" id="dre:494110"/>
<dbReference type="AGR" id="ZFIN:ZDB-GENE-041212-82"/>
<dbReference type="CTD" id="10186"/>
<dbReference type="ZFIN" id="ZDB-GENE-041212-82">
    <property type="gene designation" value="lhfpl6"/>
</dbReference>
<dbReference type="eggNOG" id="KOG4026">
    <property type="taxonomic scope" value="Eukaryota"/>
</dbReference>
<dbReference type="HOGENOM" id="CLU_084868_2_0_1"/>
<dbReference type="InParanoid" id="Q5PRC1"/>
<dbReference type="OMA" id="QWRICTV"/>
<dbReference type="OrthoDB" id="9938692at2759"/>
<dbReference type="PhylomeDB" id="Q5PRC1"/>
<dbReference type="TreeFam" id="TF321143"/>
<dbReference type="ChiTaRS" id="lhfp">
    <property type="organism name" value="zebrafish"/>
</dbReference>
<dbReference type="PRO" id="PR:Q5PRC1"/>
<dbReference type="Proteomes" id="UP000000437">
    <property type="component" value="Chromosome 10"/>
</dbReference>
<dbReference type="Bgee" id="ENSDARG00000004363">
    <property type="expression patterns" value="Expressed in swim bladder and 35 other cell types or tissues"/>
</dbReference>
<dbReference type="ExpressionAtlas" id="Q5PRC1">
    <property type="expression patterns" value="baseline"/>
</dbReference>
<dbReference type="GO" id="GO:0016020">
    <property type="term" value="C:membrane"/>
    <property type="evidence" value="ECO:0000318"/>
    <property type="project" value="GO_Central"/>
</dbReference>
<dbReference type="Gene3D" id="1.20.140.150">
    <property type="match status" value="1"/>
</dbReference>
<dbReference type="InterPro" id="IPR019372">
    <property type="entry name" value="LHFPL"/>
</dbReference>
<dbReference type="PANTHER" id="PTHR12489:SF16">
    <property type="entry name" value="LHFPL TETRASPAN SUBFAMILY MEMBER 6 PROTEIN-RELATED"/>
    <property type="match status" value="1"/>
</dbReference>
<dbReference type="PANTHER" id="PTHR12489">
    <property type="entry name" value="LIPOMA HMGIC FUSION PARTNER-LIKE PROTEIN"/>
    <property type="match status" value="1"/>
</dbReference>
<dbReference type="Pfam" id="PF10242">
    <property type="entry name" value="L_HMGIC_fpl"/>
    <property type="match status" value="1"/>
</dbReference>
<evidence type="ECO:0000250" key="1">
    <source>
        <dbReference type="UniProtKB" id="Q9Y693"/>
    </source>
</evidence>
<evidence type="ECO:0000255" key="2"/>
<evidence type="ECO:0000305" key="3"/>
<gene>
    <name evidence="1" type="primary">lhfpl6</name>
    <name type="ORF">zgc:101683</name>
</gene>
<feature type="signal peptide" evidence="2">
    <location>
        <begin position="1"/>
        <end position="21"/>
    </location>
</feature>
<feature type="chain" id="PRO_0000244759" description="LHFPL tetraspan subfamily member 6 protein">
    <location>
        <begin position="22"/>
        <end position="200"/>
    </location>
</feature>
<feature type="transmembrane region" description="Helical" evidence="2">
    <location>
        <begin position="84"/>
        <end position="104"/>
    </location>
</feature>
<feature type="transmembrane region" description="Helical" evidence="2">
    <location>
        <begin position="123"/>
        <end position="143"/>
    </location>
</feature>
<feature type="transmembrane region" description="Helical" evidence="2">
    <location>
        <begin position="172"/>
        <end position="192"/>
    </location>
</feature>
<feature type="glycosylation site" description="N-linked (GlcNAc...) asparagine" evidence="2">
    <location>
        <position position="154"/>
    </location>
</feature>
<proteinExistence type="evidence at transcript level"/>
<comment type="subcellular location">
    <subcellularLocation>
        <location evidence="3">Membrane</location>
        <topology evidence="3">Multi-pass membrane protein</topology>
    </subcellularLocation>
</comment>
<comment type="similarity">
    <text evidence="3">Belongs to the LHFP family.</text>
</comment>
<keyword id="KW-0325">Glycoprotein</keyword>
<keyword id="KW-0472">Membrane</keyword>
<keyword id="KW-1185">Reference proteome</keyword>
<keyword id="KW-0732">Signal</keyword>
<keyword id="KW-0812">Transmembrane</keyword>
<keyword id="KW-1133">Transmembrane helix</keyword>
<protein>
    <recommendedName>
        <fullName evidence="1">LHFPL tetraspan subfamily member 6 protein</fullName>
    </recommendedName>
</protein>